<proteinExistence type="evidence at protein level"/>
<protein>
    <recommendedName>
        <fullName>DNA dC-&gt;dU-editing enzyme APOBEC-3D</fullName>
        <shortName>A3D</shortName>
        <shortName evidence="14">A3DE</shortName>
        <ecNumber>3.5.4.38</ecNumber>
    </recommendedName>
</protein>
<organism>
    <name type="scientific">Homo sapiens</name>
    <name type="common">Human</name>
    <dbReference type="NCBI Taxonomy" id="9606"/>
    <lineage>
        <taxon>Eukaryota</taxon>
        <taxon>Metazoa</taxon>
        <taxon>Chordata</taxon>
        <taxon>Craniata</taxon>
        <taxon>Vertebrata</taxon>
        <taxon>Euteleostomi</taxon>
        <taxon>Mammalia</taxon>
        <taxon>Eutheria</taxon>
        <taxon>Euarchontoglires</taxon>
        <taxon>Primates</taxon>
        <taxon>Haplorrhini</taxon>
        <taxon>Catarrhini</taxon>
        <taxon>Hominidae</taxon>
        <taxon>Homo</taxon>
    </lineage>
</organism>
<sequence>MNPQIRNPMERMYRDTFYDNFENEPILYGRSYTWLCYEVKIKRGRSNLLWDTGVFRGPVLPKRQSNHRQEVYFRFENHAEMCFLSWFCGNRLPANRRFQITWFVSWNPCLPCVVKVTKFLAEHPNVTLTISAARLYYYRDRDWRWVLLRLHKAGARVKIMDYEDFAYCWENFVCNEGQPFMPWYKFDDNYASLHRTLKEILRNPMEAMYPHIFYFHFKNLLKACGRNESWLCFTMEVTKHHSAVFRKRGVFRNQVDPETHCHAERCFLSWFCDDILSPNTNYEVTWYTSWSPCPECAGEVAEFLARHSNVNLTIFTARLCYFWDTDYQEGLCSLSQEGASVKIMGYKDFVSCWKNFVYSDDEPFKPWKGLQTNFRLLKRRLREILQ</sequence>
<reference key="1">
    <citation type="journal article" date="1999" name="Nature">
        <title>The DNA sequence of human chromosome 22.</title>
        <authorList>
            <person name="Dunham I."/>
            <person name="Hunt A.R."/>
            <person name="Collins J.E."/>
            <person name="Bruskiewich R."/>
            <person name="Beare D.M."/>
            <person name="Clamp M."/>
            <person name="Smink L.J."/>
            <person name="Ainscough R."/>
            <person name="Almeida J.P."/>
            <person name="Babbage A.K."/>
            <person name="Bagguley C."/>
            <person name="Bailey J."/>
            <person name="Barlow K.F."/>
            <person name="Bates K.N."/>
            <person name="Beasley O.P."/>
            <person name="Bird C.P."/>
            <person name="Blakey S.E."/>
            <person name="Bridgeman A.M."/>
            <person name="Buck D."/>
            <person name="Burgess J."/>
            <person name="Burrill W.D."/>
            <person name="Burton J."/>
            <person name="Carder C."/>
            <person name="Carter N.P."/>
            <person name="Chen Y."/>
            <person name="Clark G."/>
            <person name="Clegg S.M."/>
            <person name="Cobley V.E."/>
            <person name="Cole C.G."/>
            <person name="Collier R.E."/>
            <person name="Connor R."/>
            <person name="Conroy D."/>
            <person name="Corby N.R."/>
            <person name="Coville G.J."/>
            <person name="Cox A.V."/>
            <person name="Davis J."/>
            <person name="Dawson E."/>
            <person name="Dhami P.D."/>
            <person name="Dockree C."/>
            <person name="Dodsworth S.J."/>
            <person name="Durbin R.M."/>
            <person name="Ellington A.G."/>
            <person name="Evans K.L."/>
            <person name="Fey J.M."/>
            <person name="Fleming K."/>
            <person name="French L."/>
            <person name="Garner A.A."/>
            <person name="Gilbert J.G.R."/>
            <person name="Goward M.E."/>
            <person name="Grafham D.V."/>
            <person name="Griffiths M.N.D."/>
            <person name="Hall C."/>
            <person name="Hall R.E."/>
            <person name="Hall-Tamlyn G."/>
            <person name="Heathcott R.W."/>
            <person name="Ho S."/>
            <person name="Holmes S."/>
            <person name="Hunt S.E."/>
            <person name="Jones M.C."/>
            <person name="Kershaw J."/>
            <person name="Kimberley A.M."/>
            <person name="King A."/>
            <person name="Laird G.K."/>
            <person name="Langford C.F."/>
            <person name="Leversha M.A."/>
            <person name="Lloyd C."/>
            <person name="Lloyd D.M."/>
            <person name="Martyn I.D."/>
            <person name="Mashreghi-Mohammadi M."/>
            <person name="Matthews L.H."/>
            <person name="Mccann O.T."/>
            <person name="Mcclay J."/>
            <person name="Mclaren S."/>
            <person name="McMurray A.A."/>
            <person name="Milne S.A."/>
            <person name="Mortimore B.J."/>
            <person name="Odell C.N."/>
            <person name="Pavitt R."/>
            <person name="Pearce A.V."/>
            <person name="Pearson D."/>
            <person name="Phillimore B.J.C.T."/>
            <person name="Phillips S.H."/>
            <person name="Plumb R.W."/>
            <person name="Ramsay H."/>
            <person name="Ramsey Y."/>
            <person name="Rogers L."/>
            <person name="Ross M.T."/>
            <person name="Scott C.E."/>
            <person name="Sehra H.K."/>
            <person name="Skuce C.D."/>
            <person name="Smalley S."/>
            <person name="Smith M.L."/>
            <person name="Soderlund C."/>
            <person name="Spragon L."/>
            <person name="Steward C.A."/>
            <person name="Sulston J.E."/>
            <person name="Swann R.M."/>
            <person name="Vaudin M."/>
            <person name="Wall M."/>
            <person name="Wallis J.M."/>
            <person name="Whiteley M.N."/>
            <person name="Willey D.L."/>
            <person name="Williams L."/>
            <person name="Williams S.A."/>
            <person name="Williamson H."/>
            <person name="Wilmer T.E."/>
            <person name="Wilming L."/>
            <person name="Wright C.L."/>
            <person name="Hubbard T."/>
            <person name="Bentley D.R."/>
            <person name="Beck S."/>
            <person name="Rogers J."/>
            <person name="Shimizu N."/>
            <person name="Minoshima S."/>
            <person name="Kawasaki K."/>
            <person name="Sasaki T."/>
            <person name="Asakawa S."/>
            <person name="Kudoh J."/>
            <person name="Shintani A."/>
            <person name="Shibuya K."/>
            <person name="Yoshizaki Y."/>
            <person name="Aoki N."/>
            <person name="Mitsuyama S."/>
            <person name="Roe B.A."/>
            <person name="Chen F."/>
            <person name="Chu L."/>
            <person name="Crabtree J."/>
            <person name="Deschamps S."/>
            <person name="Do A."/>
            <person name="Do T."/>
            <person name="Dorman A."/>
            <person name="Fang F."/>
            <person name="Fu Y."/>
            <person name="Hu P."/>
            <person name="Hua A."/>
            <person name="Kenton S."/>
            <person name="Lai H."/>
            <person name="Lao H.I."/>
            <person name="Lewis J."/>
            <person name="Lewis S."/>
            <person name="Lin S.-P."/>
            <person name="Loh P."/>
            <person name="Malaj E."/>
            <person name="Nguyen T."/>
            <person name="Pan H."/>
            <person name="Phan S."/>
            <person name="Qi S."/>
            <person name="Qian Y."/>
            <person name="Ray L."/>
            <person name="Ren Q."/>
            <person name="Shaull S."/>
            <person name="Sloan D."/>
            <person name="Song L."/>
            <person name="Wang Q."/>
            <person name="Wang Y."/>
            <person name="Wang Z."/>
            <person name="White J."/>
            <person name="Willingham D."/>
            <person name="Wu H."/>
            <person name="Yao Z."/>
            <person name="Zhan M."/>
            <person name="Zhang G."/>
            <person name="Chissoe S."/>
            <person name="Murray J."/>
            <person name="Miller N."/>
            <person name="Minx P."/>
            <person name="Fulton R."/>
            <person name="Johnson D."/>
            <person name="Bemis G."/>
            <person name="Bentley D."/>
            <person name="Bradshaw H."/>
            <person name="Bourne S."/>
            <person name="Cordes M."/>
            <person name="Du Z."/>
            <person name="Fulton L."/>
            <person name="Goela D."/>
            <person name="Graves T."/>
            <person name="Hawkins J."/>
            <person name="Hinds K."/>
            <person name="Kemp K."/>
            <person name="Latreille P."/>
            <person name="Layman D."/>
            <person name="Ozersky P."/>
            <person name="Rohlfing T."/>
            <person name="Scheet P."/>
            <person name="Walker C."/>
            <person name="Wamsley A."/>
            <person name="Wohldmann P."/>
            <person name="Pepin K."/>
            <person name="Nelson J."/>
            <person name="Korf I."/>
            <person name="Bedell J.A."/>
            <person name="Hillier L.W."/>
            <person name="Mardis E."/>
            <person name="Waterston R."/>
            <person name="Wilson R."/>
            <person name="Emanuel B.S."/>
            <person name="Shaikh T."/>
            <person name="Kurahashi H."/>
            <person name="Saitta S."/>
            <person name="Budarf M.L."/>
            <person name="McDermid H.E."/>
            <person name="Johnson A."/>
            <person name="Wong A.C.C."/>
            <person name="Morrow B.E."/>
            <person name="Edelmann L."/>
            <person name="Kim U.J."/>
            <person name="Shizuya H."/>
            <person name="Simon M.I."/>
            <person name="Dumanski J.P."/>
            <person name="Peyrard M."/>
            <person name="Kedra D."/>
            <person name="Seroussi E."/>
            <person name="Fransson I."/>
            <person name="Tapia I."/>
            <person name="Bruder C.E."/>
            <person name="O'Brien K.P."/>
            <person name="Wilkinson P."/>
            <person name="Bodenteich A."/>
            <person name="Hartman K."/>
            <person name="Hu X."/>
            <person name="Khan A.S."/>
            <person name="Lane L."/>
            <person name="Tilahun Y."/>
            <person name="Wright H."/>
        </authorList>
    </citation>
    <scope>NUCLEOTIDE SEQUENCE [LARGE SCALE GENOMIC DNA]</scope>
</reference>
<reference key="2">
    <citation type="journal article" date="2002" name="Genomics">
        <title>An anthropoid-specific locus of orphan C to U RNA-editing enzymes on chromosome 22.</title>
        <authorList>
            <person name="Jarmuz A."/>
            <person name="Chester A."/>
            <person name="Bayliss J."/>
            <person name="Gisbourne J."/>
            <person name="Dunham I."/>
            <person name="Scott J."/>
            <person name="Navaratnam N."/>
        </authorList>
    </citation>
    <scope>GENE FAMILY ORGANIZATION</scope>
</reference>
<reference key="3">
    <citation type="journal article" date="2003" name="Trends Genet.">
        <title>Messenger RNA editing in mammals: new members of the APOBEC family seeking roles in the family business.</title>
        <authorList>
            <person name="Wedekind J.E."/>
            <person name="Dance G.S.C."/>
            <person name="Sowden M.P."/>
            <person name="Smith H.C."/>
        </authorList>
    </citation>
    <scope>REVIEW ON APOBEC FAMILIES</scope>
</reference>
<reference key="4">
    <citation type="journal article" date="2003" name="Cell">
        <title>Species-specific exclusion of APOBEC3G from HIV-1 virions by Vif.</title>
        <authorList>
            <person name="Mariani R."/>
            <person name="Chen D."/>
            <person name="Schroefelbauer B."/>
            <person name="Navarro F."/>
            <person name="Koenig R."/>
            <person name="Bollman B."/>
            <person name="Muenk C."/>
            <person name="Nymark-McMahon H."/>
            <person name="Landau N.R."/>
        </authorList>
    </citation>
    <scope>FUNCTION IN HIV-1 INFECTIVITY</scope>
</reference>
<reference key="5">
    <citation type="journal article" date="2006" name="J. Virol.">
        <title>Identification of APOBEC3DE as another antiretroviral factor from the human APOBEC family.</title>
        <authorList>
            <person name="Dang Y."/>
            <person name="Wang X."/>
            <person name="Esselman W.J."/>
            <person name="Zheng Y.-H."/>
        </authorList>
    </citation>
    <scope>FUNCTION</scope>
    <scope>MUTAGENESIS OF ASP-140</scope>
    <scope>INTERACTION WITH HIV-1 VIF (MICROBIAL INFECTION)</scope>
    <scope>INTERACTION WITH APOBEC3F AND APOBEC3G</scope>
</reference>
<reference key="6">
    <citation type="journal article" date="2008" name="Annu. Rev. Immunol.">
        <title>The APOBEC3 cytidine deaminases: an innate defensive network opposing exogenous retroviruses and endogenous retroelements.</title>
        <authorList>
            <person name="Chiu Y.L."/>
            <person name="Greene W.C."/>
        </authorList>
    </citation>
    <scope>REVIEW</scope>
</reference>
<reference key="7">
    <citation type="journal article" date="2010" name="Nat. Struct. Mol. Biol.">
        <title>APOBEC3 proteins mediate the clearance of foreign DNA from human cells.</title>
        <authorList>
            <person name="Stenglein M.D."/>
            <person name="Burns M.B."/>
            <person name="Li M."/>
            <person name="Lengyel J."/>
            <person name="Harris R.S."/>
        </authorList>
    </citation>
    <scope>FUNCTION IN RETROTRANSPOSITION</scope>
</reference>
<reference key="8">
    <citation type="journal article" date="2010" name="Nucleic Acids Res.">
        <title>Quantitative profiling of the full APOBEC3 mRNA repertoire in lymphocytes and tissues: implications for HIV-1 restriction.</title>
        <authorList>
            <person name="Refsland E.W."/>
            <person name="Stenglein M.D."/>
            <person name="Shindo K."/>
            <person name="Albin J.S."/>
            <person name="Brown W.L."/>
            <person name="Harris R.S."/>
        </authorList>
    </citation>
    <scope>TISSUE SPECIFICITY</scope>
</reference>
<reference key="9">
    <citation type="journal article" date="2011" name="J. Virol.">
        <title>Human and rhesus APOBEC3D, APOBEC3F, APOBEC3G, and APOBEC3H demonstrate a conserved capacity to restrict Vif-deficient HIV-1.</title>
        <authorList>
            <person name="Hultquist J.F."/>
            <person name="Lengyel J.A."/>
            <person name="Refsland E.W."/>
            <person name="LaRue R.S."/>
            <person name="Lackey L."/>
            <person name="Brown W.L."/>
            <person name="Harris R.S."/>
        </authorList>
    </citation>
    <scope>FUNCTION IN HIV-1 RESTRICTION</scope>
    <scope>SUBCELLULAR LOCATION</scope>
    <scope>ACTIVITY REGULATION</scope>
</reference>
<reference key="10">
    <citation type="journal article" date="2012" name="Front. Microbiol.">
        <title>Retroelements versus APOBEC3 family members: No great escape from the magnificent seven.</title>
        <authorList>
            <person name="Arias J.F."/>
            <person name="Koyama T."/>
            <person name="Kinomoto M."/>
            <person name="Tokunaga K."/>
        </authorList>
    </citation>
    <scope>REVIEW</scope>
</reference>
<reference key="11">
    <citation type="journal article" date="2012" name="J. Virol.">
        <title>HIV-1 replication and APOBEC3 antiviral activity are not regulated by P bodies.</title>
        <authorList>
            <person name="Phalora P.K."/>
            <person name="Sherer N.M."/>
            <person name="Wolinsky S.M."/>
            <person name="Swanson C.M."/>
            <person name="Malim M.H."/>
        </authorList>
    </citation>
    <scope>SUBCELLULAR LOCATION</scope>
</reference>
<reference key="12">
    <citation type="journal article" date="2012" name="Nat. Struct. Mol. Biol.">
        <title>The APOBEC3C crystal structure and the interface for HIV-1 Vif binding.</title>
        <authorList>
            <person name="Kitamura S."/>
            <person name="Ode H."/>
            <person name="Nakashima M."/>
            <person name="Imahashi M."/>
            <person name="Naganawa Y."/>
            <person name="Kurosawa T."/>
            <person name="Yokomaku Y."/>
            <person name="Yamane T."/>
            <person name="Watanabe N."/>
            <person name="Suzuki A."/>
            <person name="Sugiura W."/>
            <person name="Iwatani Y."/>
        </authorList>
    </citation>
    <scope>INTERACTION WITH HIV-1 VIF (MICROBIAL INFECTION)</scope>
    <scope>MUTAGENESIS OF GLU-264; LEU-268; PHE-271; CYS-272; 275-ILE-LEU-276; SER-277; TYR-282; GLU-302; PHE-303; HIS-307 AND GLU-337</scope>
</reference>
<reference key="13">
    <citation type="journal article" date="2012" name="PLoS Pathog.">
        <title>Endogenous origins of HIV-1 G-to-A hypermutation and restriction in the nonpermissive T cell line CEM2n.</title>
        <authorList>
            <person name="Refsland E.W."/>
            <person name="Hultquist J.F."/>
            <person name="Harris R.S."/>
        </authorList>
    </citation>
    <scope>FUNCTION IN HIV-1 RESTRICTION</scope>
</reference>
<reference key="14">
    <citation type="journal article" date="2012" name="Semin. Cell Dev. Biol.">
        <title>Functions and regulation of the APOBEC family of proteins.</title>
        <authorList>
            <person name="Smith H.C."/>
            <person name="Bennett R.P."/>
            <person name="Kizilyer A."/>
            <person name="McDougall W.M."/>
            <person name="Prohaska K.M."/>
        </authorList>
    </citation>
    <scope>REVIEW</scope>
</reference>
<reference key="15">
    <citation type="journal article" date="2016" name="PLoS ONE">
        <title>APOBEC3DE Inhibits LINE-1 Retrotransposition by Interacting with ORF1p and Influencing LINE Reverse Transcriptase Activity.</title>
        <authorList>
            <person name="Liang W."/>
            <person name="Xu J."/>
            <person name="Yuan W."/>
            <person name="Song X."/>
            <person name="Zhang J."/>
            <person name="Wei W."/>
            <person name="Yu X.F."/>
            <person name="Yang Y."/>
        </authorList>
    </citation>
    <scope>FUNCTION</scope>
    <scope>SUBCELLULAR LOCATION</scope>
    <scope>INTERACTION WITH L1RE1</scope>
</reference>
<reference key="16">
    <citation type="journal article" date="2016" name="J. Mol. Biol.">
        <title>APOBEC3DE Antagonizes Hepatitis B Virus Restriction Factors APOBEC3F and APOBEC3G.</title>
        <authorList>
            <person name="Bouzidi M.S."/>
            <person name="Caval V."/>
            <person name="Suspene R."/>
            <person name="Hallez C."/>
            <person name="Pineau P."/>
            <person name="Wain-Hobson S."/>
            <person name="Vartanian J.P."/>
        </authorList>
    </citation>
    <scope>FUNCTION (MICROBIAL INFECTION)</scope>
    <scope>SUBCELLULAR LOCATION</scope>
    <scope>INTERACTION WITH APOBEC3F AND APOBEC3G</scope>
</reference>
<reference key="17">
    <citation type="journal article" date="2013" name="J. Virol.">
        <title>APOBEC3G restricts HIV-1 to a greater extent than APOBEC3F and APOBEC3DE in human primary CD4+ t cells and macrophages.</title>
        <authorList>
            <person name="Chaipan C."/>
            <person name="Smith J.L."/>
            <person name="Hu W.S."/>
            <person name="Pathak V.K."/>
        </authorList>
    </citation>
    <scope>FUNCTION IN HIV-1 RESTRICTION</scope>
</reference>
<reference key="18">
    <citation type="journal article" date="2013" name="J. Virol.">
        <title>The suppression of HIV-1 infection by APOBEC3 proteins in primary human CD4+ T cells is associated with the inhibition of processive reverse transcription as well as excessive cytidine deamination.</title>
        <authorList>
            <person name="Gillick K."/>
            <person name="Pollpeter D."/>
            <person name="Phalora P."/>
            <person name="Kim E.Y."/>
            <person name="Wolinsky S.M."/>
            <person name="Malim M.H."/>
        </authorList>
    </citation>
    <scope>FUNCTION IN HIV-1 RESTRICTION</scope>
</reference>
<feature type="chain" id="PRO_0000171756" description="DNA dC-&gt;dU-editing enzyme APOBEC-3D">
    <location>
        <begin position="1"/>
        <end position="386"/>
    </location>
</feature>
<feature type="domain" description="CMP/dCMP-type deaminase 1" evidence="2">
    <location>
        <begin position="29"/>
        <end position="145"/>
    </location>
</feature>
<feature type="domain" description="CMP/dCMP-type deaminase 2" evidence="2">
    <location>
        <begin position="187"/>
        <end position="334"/>
    </location>
</feature>
<feature type="active site" description="Proton donor" evidence="2">
    <location>
        <position position="264"/>
    </location>
</feature>
<feature type="binding site" evidence="2">
    <location>
        <position position="78"/>
    </location>
    <ligand>
        <name>Zn(2+)</name>
        <dbReference type="ChEBI" id="CHEBI:29105"/>
        <label>1</label>
    </ligand>
</feature>
<feature type="binding site" evidence="2">
    <location>
        <position position="109"/>
    </location>
    <ligand>
        <name>Zn(2+)</name>
        <dbReference type="ChEBI" id="CHEBI:29105"/>
        <label>1</label>
    </ligand>
</feature>
<feature type="binding site" evidence="2">
    <location>
        <position position="112"/>
    </location>
    <ligand>
        <name>Zn(2+)</name>
        <dbReference type="ChEBI" id="CHEBI:29105"/>
        <label>1</label>
    </ligand>
</feature>
<feature type="binding site" evidence="2">
    <location>
        <position position="262"/>
    </location>
    <ligand>
        <name>Zn(2+)</name>
        <dbReference type="ChEBI" id="CHEBI:29105"/>
        <label>2</label>
        <note>catalytic</note>
    </ligand>
</feature>
<feature type="binding site" evidence="2">
    <location>
        <position position="293"/>
    </location>
    <ligand>
        <name>Zn(2+)</name>
        <dbReference type="ChEBI" id="CHEBI:29105"/>
        <label>2</label>
        <note>catalytic</note>
    </ligand>
</feature>
<feature type="binding site" evidence="2">
    <location>
        <position position="296"/>
    </location>
    <ligand>
        <name>Zn(2+)</name>
        <dbReference type="ChEBI" id="CHEBI:29105"/>
        <label>2</label>
        <note>catalytic</note>
    </ligand>
</feature>
<feature type="mutagenesis site" description="About two-third loss of anti HIV-1 activity." evidence="4">
    <original>D</original>
    <variation>K</variation>
    <location>
        <position position="140"/>
    </location>
</feature>
<feature type="mutagenesis site" description="No effect on Vif binding." evidence="9">
    <original>E</original>
    <variation>Q</variation>
    <location>
        <position position="264"/>
    </location>
</feature>
<feature type="mutagenesis site" description="Resistant to HIV-1 Vif and abolishes Vif binding." evidence="9">
    <original>L</original>
    <variation>D</variation>
    <location>
        <position position="268"/>
    </location>
</feature>
<feature type="mutagenesis site" description="Resistant to HIV-1 Vif and abolishes Vif binding." evidence="9">
    <original>F</original>
    <variation>A</variation>
    <location>
        <position position="271"/>
    </location>
</feature>
<feature type="mutagenesis site" description="Resistant to HIV-1 Vif and reduces Vif binding." evidence="9">
    <original>C</original>
    <variation>K</variation>
    <location>
        <position position="272"/>
    </location>
</feature>
<feature type="mutagenesis site" description="Resistant to HIV-1 Vif and abolishes Vif binding." evidence="9">
    <original>IL</original>
    <variation>AA</variation>
    <location>
        <begin position="275"/>
        <end position="276"/>
    </location>
</feature>
<feature type="mutagenesis site" description="Resistant to HIV-1 Vif and reduces Vif binding." evidence="9">
    <original>S</original>
    <variation>D</variation>
    <location>
        <position position="277"/>
    </location>
</feature>
<feature type="mutagenesis site" description="Resistant to HIV-1 Vif and abolishes Vif binding." evidence="9">
    <original>Y</original>
    <variation>A</variation>
    <location>
        <position position="282"/>
    </location>
</feature>
<feature type="mutagenesis site" description="Resistant to HIV-1 Vif and abolishes Vif binding." evidence="9">
    <original>E</original>
    <variation>K</variation>
    <location>
        <position position="302"/>
    </location>
</feature>
<feature type="mutagenesis site" description="Resistant to HIV-1 Vif and abolishes Vif binding." evidence="9">
    <original>F</original>
    <variation>K</variation>
    <location>
        <position position="303"/>
    </location>
</feature>
<feature type="mutagenesis site" description="Resistant to HIV-1 Vif and abolishes Vif binding." evidence="9">
    <original>H</original>
    <variation>D</variation>
    <location>
        <position position="307"/>
    </location>
</feature>
<feature type="mutagenesis site" description="Resistant to HIV-1 Vif and reduces Vif binding." evidence="9">
    <original>E</original>
    <variation>A</variation>
    <location>
        <position position="337"/>
    </location>
</feature>
<feature type="mutagenesis site" description="Resistant to HIV-1 Vif and abolishes Vif binding." evidence="9">
    <original>E</original>
    <variation>K</variation>
    <location>
        <position position="337"/>
    </location>
</feature>
<accession>Q96AK3</accession>
<accession>Q5JZ91</accession>
<accession>Q7Z2N2</accession>
<accession>Q7Z2N5</accession>
<accession>Q7Z2N6</accession>
<comment type="function">
    <text evidence="3 4 5 7 8 10 11">DNA deaminase (cytidine deaminase) which acts as an inhibitor of retrovirus replication and retrotransposon mobility via deaminase-dependent and -independent mechanisms (PubMed:16920826, PubMed:20062055, PubMed:21835787). Exhibits antiviral activity against HIV-1. After the penetration of retroviral nucleocapsids into target cells of infection and the initiation of reverse transcription, it can induce the conversion of cytosine to uracil in the minus-sense single-strand viral DNA, leading to G-to-A hypermutations in the subsequent plus-strand viral DNA (PubMed:16920826). The resultant detrimental levels of mutations in the proviral genome, along with a deamination-independent mechanism that works prior to the proviral integration, together exert efficient antiretroviral effects in infected target cells. Selectively targets single-stranded DNA and does not deaminate double-stranded DNA or single- or double-stranded RNA. Also inhibits the mobility of LTR and non-LTR retrotransposons (PubMed:27428332).</text>
</comment>
<comment type="function">
    <text evidence="12">(Microbial infection) Enhances hepatitis B virus/HBV replication by excluding restriction factors APOBEC3F and APOBEC3G from HBV capsids.</text>
</comment>
<comment type="catalytic activity">
    <reaction>
        <text>a 2'-deoxycytidine in single-stranded DNA + H2O + H(+) = a 2'-deoxyuridine in single-stranded DNA + NH4(+)</text>
        <dbReference type="Rhea" id="RHEA:50948"/>
        <dbReference type="Rhea" id="RHEA-COMP:12846"/>
        <dbReference type="Rhea" id="RHEA-COMP:12847"/>
        <dbReference type="ChEBI" id="CHEBI:15377"/>
        <dbReference type="ChEBI" id="CHEBI:15378"/>
        <dbReference type="ChEBI" id="CHEBI:28938"/>
        <dbReference type="ChEBI" id="CHEBI:85452"/>
        <dbReference type="ChEBI" id="CHEBI:133902"/>
        <dbReference type="EC" id="3.5.4.38"/>
    </reaction>
</comment>
<comment type="cofactor">
    <cofactor evidence="1">
        <name>Zn(2+)</name>
        <dbReference type="ChEBI" id="CHEBI:29105"/>
    </cofactor>
</comment>
<comment type="activity regulation">
    <text evidence="7">(Microbial infection) Antiviral activity is neutralized by the HIV-1 virion infectivity factor (Vif), that prevents its incorporation into progeny virions by both inhibiting its translation and/or by inducing its ubiquitination and subsequent degradation by the 26S proteasome.</text>
</comment>
<comment type="subunit">
    <text evidence="4 12 13">Can form homo- and heterodimers with APOBEC3F and APOBEC3G (PubMed:16920826, PubMed:27289067). Interacts with L1RE1; this interaction inhibits LINE-1 retrotransposition (PubMed:27428332).</text>
</comment>
<comment type="subunit">
    <text evidence="4 9">(Microbial infection) Interacts with HIV-1 Vif (PubMed:16920826, PubMed:23001005). This interaction triggers APOBEC3D polyubiquitylation and degradation by the 26S proteasome (PubMed:16920826).</text>
</comment>
<comment type="subcellular location">
    <subcellularLocation>
        <location evidence="12 13">Cytoplasm</location>
    </subcellularLocation>
    <subcellularLocation>
        <location>Cytoplasm</location>
        <location>P-body</location>
    </subcellularLocation>
</comment>
<comment type="tissue specificity">
    <text evidence="6">Expressed in lymphoid organs. Also detected in non-lymphoid tissues including lung.</text>
</comment>
<comment type="domain">
    <text>The CMP/dCMP deaminase domain 1 mediates RNA binding, RNA-dependent oligomerization and virion incorporation whereas the CMP/dCMP deaminase domain 2 confers deoxycytidine deaminase activity and substrate sequence specificity.</text>
</comment>
<comment type="miscellaneous">
    <text>It is one of seven related genes or pseudogenes found in a cluster, thought to result from gene duplication, on chromosome 22.</text>
</comment>
<comment type="similarity">
    <text evidence="15">Belongs to the cytidine and deoxycytidylate deaminase family.</text>
</comment>
<keyword id="KW-0051">Antiviral defense</keyword>
<keyword id="KW-0963">Cytoplasm</keyword>
<keyword id="KW-0378">Hydrolase</keyword>
<keyword id="KW-0391">Immunity</keyword>
<keyword id="KW-0399">Innate immunity</keyword>
<keyword id="KW-0479">Metal-binding</keyword>
<keyword id="KW-1267">Proteomics identification</keyword>
<keyword id="KW-1185">Reference proteome</keyword>
<keyword id="KW-0677">Repeat</keyword>
<keyword id="KW-0862">Zinc</keyword>
<evidence type="ECO:0000250" key="1"/>
<evidence type="ECO:0000255" key="2">
    <source>
        <dbReference type="PROSITE-ProRule" id="PRU01083"/>
    </source>
</evidence>
<evidence type="ECO:0000269" key="3">
    <source>
    </source>
</evidence>
<evidence type="ECO:0000269" key="4">
    <source>
    </source>
</evidence>
<evidence type="ECO:0000269" key="5">
    <source>
    </source>
</evidence>
<evidence type="ECO:0000269" key="6">
    <source>
    </source>
</evidence>
<evidence type="ECO:0000269" key="7">
    <source>
    </source>
</evidence>
<evidence type="ECO:0000269" key="8">
    <source>
    </source>
</evidence>
<evidence type="ECO:0000269" key="9">
    <source>
    </source>
</evidence>
<evidence type="ECO:0000269" key="10">
    <source>
    </source>
</evidence>
<evidence type="ECO:0000269" key="11">
    <source>
    </source>
</evidence>
<evidence type="ECO:0000269" key="12">
    <source>
    </source>
</evidence>
<evidence type="ECO:0000269" key="13">
    <source>
    </source>
</evidence>
<evidence type="ECO:0000303" key="14">
    <source>
    </source>
</evidence>
<evidence type="ECO:0000305" key="15"/>
<evidence type="ECO:0000312" key="16">
    <source>
        <dbReference type="HGNC" id="HGNC:17354"/>
    </source>
</evidence>
<gene>
    <name evidence="16" type="primary">APOBEC3D</name>
    <name evidence="16" type="synonym">APOBEC3DE</name>
</gene>
<dbReference type="EC" id="3.5.4.38"/>
<dbReference type="EMBL" id="AL022318">
    <property type="status" value="NOT_ANNOTATED_CDS"/>
    <property type="molecule type" value="Genomic_DNA"/>
</dbReference>
<dbReference type="CCDS" id="CCDS46709.1"/>
<dbReference type="RefSeq" id="NP_689639.2">
    <property type="nucleotide sequence ID" value="NM_152426.4"/>
</dbReference>
<dbReference type="SMR" id="Q96AK3"/>
<dbReference type="FunCoup" id="Q96AK3">
    <property type="interactions" value="262"/>
</dbReference>
<dbReference type="IntAct" id="Q96AK3">
    <property type="interactions" value="59"/>
</dbReference>
<dbReference type="MINT" id="Q96AK3"/>
<dbReference type="STRING" id="9606.ENSP00000216099"/>
<dbReference type="iPTMnet" id="Q96AK3"/>
<dbReference type="PhosphoSitePlus" id="Q96AK3"/>
<dbReference type="SwissPalm" id="Q96AK3"/>
<dbReference type="BioMuta" id="APOBEC3D"/>
<dbReference type="DMDM" id="48474596"/>
<dbReference type="jPOST" id="Q96AK3"/>
<dbReference type="MassIVE" id="Q96AK3"/>
<dbReference type="PaxDb" id="9606-ENSP00000216099"/>
<dbReference type="PeptideAtlas" id="Q96AK3"/>
<dbReference type="ProteomicsDB" id="75971"/>
<dbReference type="Pumba" id="Q96AK3"/>
<dbReference type="Antibodypedia" id="35025">
    <property type="antibodies" value="156 antibodies from 26 providers"/>
</dbReference>
<dbReference type="DNASU" id="140564"/>
<dbReference type="Ensembl" id="ENST00000216099.13">
    <property type="protein sequence ID" value="ENSP00000216099.7"/>
    <property type="gene ID" value="ENSG00000243811.12"/>
</dbReference>
<dbReference type="GeneID" id="140564"/>
<dbReference type="MANE-Select" id="ENST00000216099.13">
    <property type="protein sequence ID" value="ENSP00000216099.7"/>
    <property type="RefSeq nucleotide sequence ID" value="NM_152426.4"/>
    <property type="RefSeq protein sequence ID" value="NP_689639.2"/>
</dbReference>
<dbReference type="UCSC" id="uc003awt.5">
    <property type="organism name" value="human"/>
</dbReference>
<dbReference type="AGR" id="HGNC:17354"/>
<dbReference type="GeneCards" id="APOBEC3D"/>
<dbReference type="HGNC" id="HGNC:17354">
    <property type="gene designation" value="APOBEC3D"/>
</dbReference>
<dbReference type="HPA" id="ENSG00000243811">
    <property type="expression patterns" value="Tissue enhanced (lymphoid)"/>
</dbReference>
<dbReference type="MIM" id="609900">
    <property type="type" value="gene"/>
</dbReference>
<dbReference type="neXtProt" id="NX_Q96AK3"/>
<dbReference type="OpenTargets" id="ENSG00000243811"/>
<dbReference type="PharmGKB" id="PA24894"/>
<dbReference type="VEuPathDB" id="HostDB:ENSG00000243811"/>
<dbReference type="eggNOG" id="KOG4075">
    <property type="taxonomic scope" value="Eukaryota"/>
</dbReference>
<dbReference type="GeneTree" id="ENSGT00940000162695"/>
<dbReference type="HOGENOM" id="CLU_047918_0_0_1"/>
<dbReference type="InParanoid" id="Q96AK3"/>
<dbReference type="OMA" id="HTELCIL"/>
<dbReference type="OrthoDB" id="9445293at2759"/>
<dbReference type="PAN-GO" id="Q96AK3">
    <property type="GO annotations" value="12 GO annotations based on evolutionary models"/>
</dbReference>
<dbReference type="PhylomeDB" id="Q96AK3"/>
<dbReference type="TreeFam" id="TF331356"/>
<dbReference type="BRENDA" id="3.5.4.38">
    <property type="organism ID" value="2681"/>
</dbReference>
<dbReference type="PathwayCommons" id="Q96AK3"/>
<dbReference type="SignaLink" id="Q96AK3"/>
<dbReference type="SIGNOR" id="Q96AK3"/>
<dbReference type="Pharos" id="Q96AK3">
    <property type="development level" value="Tbio"/>
</dbReference>
<dbReference type="PRO" id="PR:Q96AK3"/>
<dbReference type="Proteomes" id="UP000005640">
    <property type="component" value="Chromosome 22"/>
</dbReference>
<dbReference type="RNAct" id="Q96AK3">
    <property type="molecule type" value="protein"/>
</dbReference>
<dbReference type="Bgee" id="ENSG00000243811">
    <property type="expression patterns" value="Expressed in granulocyte and 99 other cell types or tissues"/>
</dbReference>
<dbReference type="ExpressionAtlas" id="Q96AK3">
    <property type="expression patterns" value="baseline and differential"/>
</dbReference>
<dbReference type="GO" id="GO:0005737">
    <property type="term" value="C:cytoplasm"/>
    <property type="evidence" value="ECO:0000314"/>
    <property type="project" value="UniProtKB"/>
</dbReference>
<dbReference type="GO" id="GO:0005634">
    <property type="term" value="C:nucleus"/>
    <property type="evidence" value="ECO:0000318"/>
    <property type="project" value="GO_Central"/>
</dbReference>
<dbReference type="GO" id="GO:0000932">
    <property type="term" value="C:P-body"/>
    <property type="evidence" value="ECO:0000314"/>
    <property type="project" value="UniProtKB"/>
</dbReference>
<dbReference type="GO" id="GO:0004126">
    <property type="term" value="F:cytidine deaminase activity"/>
    <property type="evidence" value="ECO:0000318"/>
    <property type="project" value="GO_Central"/>
</dbReference>
<dbReference type="GO" id="GO:0003723">
    <property type="term" value="F:RNA binding"/>
    <property type="evidence" value="ECO:0000318"/>
    <property type="project" value="GO_Central"/>
</dbReference>
<dbReference type="GO" id="GO:0008270">
    <property type="term" value="F:zinc ion binding"/>
    <property type="evidence" value="ECO:0007669"/>
    <property type="project" value="InterPro"/>
</dbReference>
<dbReference type="GO" id="GO:0044355">
    <property type="term" value="P:clearance of foreign intracellular DNA"/>
    <property type="evidence" value="ECO:0000314"/>
    <property type="project" value="GO_Central"/>
</dbReference>
<dbReference type="GO" id="GO:0016554">
    <property type="term" value="P:cytidine to uridine editing"/>
    <property type="evidence" value="ECO:0000318"/>
    <property type="project" value="GO_Central"/>
</dbReference>
<dbReference type="GO" id="GO:0051607">
    <property type="term" value="P:defense response to virus"/>
    <property type="evidence" value="ECO:0000314"/>
    <property type="project" value="UniProtKB"/>
</dbReference>
<dbReference type="GO" id="GO:0070383">
    <property type="term" value="P:DNA cytosine deamination"/>
    <property type="evidence" value="ECO:0000314"/>
    <property type="project" value="UniProtKB"/>
</dbReference>
<dbReference type="GO" id="GO:0045087">
    <property type="term" value="P:innate immune response"/>
    <property type="evidence" value="ECO:0007669"/>
    <property type="project" value="UniProtKB-KW"/>
</dbReference>
<dbReference type="GO" id="GO:0045869">
    <property type="term" value="P:negative regulation of single stranded viral RNA replication via double stranded DNA intermediate"/>
    <property type="evidence" value="ECO:0000314"/>
    <property type="project" value="UniProtKB"/>
</dbReference>
<dbReference type="CDD" id="cd01283">
    <property type="entry name" value="cytidine_deaminase"/>
    <property type="match status" value="2"/>
</dbReference>
<dbReference type="FunFam" id="3.40.140.10:FF:000044">
    <property type="entry name" value="Apolipoprotein B mRNA editing enzyme catalytic subunit 3B"/>
    <property type="match status" value="1"/>
</dbReference>
<dbReference type="FunFam" id="3.40.140.10:FF:000029">
    <property type="entry name" value="DNA dC-&gt;dU-editing enzyme APOBEC-3G"/>
    <property type="match status" value="1"/>
</dbReference>
<dbReference type="Gene3D" id="3.40.140.10">
    <property type="entry name" value="Cytidine Deaminase, domain 2"/>
    <property type="match status" value="2"/>
</dbReference>
<dbReference type="InterPro" id="IPR016192">
    <property type="entry name" value="APOBEC/CMP_deaminase_Zn-bd"/>
</dbReference>
<dbReference type="InterPro" id="IPR050610">
    <property type="entry name" value="APOBEC_Cyt_Deaminase"/>
</dbReference>
<dbReference type="InterPro" id="IPR002125">
    <property type="entry name" value="CMP_dCMP_dom"/>
</dbReference>
<dbReference type="InterPro" id="IPR016193">
    <property type="entry name" value="Cytidine_deaminase-like"/>
</dbReference>
<dbReference type="PANTHER" id="PTHR13857:SF24">
    <property type="entry name" value="DNA DC-DU-EDITING ENZYME APOBEC-3D"/>
    <property type="match status" value="1"/>
</dbReference>
<dbReference type="PANTHER" id="PTHR13857">
    <property type="entry name" value="MRNA EDITING ENZYME"/>
    <property type="match status" value="1"/>
</dbReference>
<dbReference type="Pfam" id="PF18782">
    <property type="entry name" value="NAD2"/>
    <property type="match status" value="2"/>
</dbReference>
<dbReference type="SUPFAM" id="SSF53927">
    <property type="entry name" value="Cytidine deaminase-like"/>
    <property type="match status" value="2"/>
</dbReference>
<dbReference type="PROSITE" id="PS00903">
    <property type="entry name" value="CYT_DCMP_DEAMINASES_1"/>
    <property type="match status" value="2"/>
</dbReference>
<dbReference type="PROSITE" id="PS51747">
    <property type="entry name" value="CYT_DCMP_DEAMINASES_2"/>
    <property type="match status" value="2"/>
</dbReference>
<name>ABC3D_HUMAN</name>